<organismHost>
    <name type="scientific">Bos taurus</name>
    <name type="common">Bovine</name>
    <dbReference type="NCBI Taxonomy" id="9913"/>
</organismHost>
<protein>
    <recommendedName>
        <fullName>Major capsid protein VP1</fullName>
    </recommendedName>
    <alternativeName>
        <fullName>Major structural protein VP1</fullName>
    </alternativeName>
</protein>
<comment type="function">
    <text evidence="1 4">Forms an icosahedral capsid with a T=7 symmetry and a 40 nm diameter. The capsid is composed of 72 pentamers linked to each other by disulfide bonds and associated with VP2 or VP3 proteins. Interacts with sialic acids on the cell surface to provide virion attachment to target cell. Once attached, the virion is internalized by endocytosis and traffics to the endoplasmic reticulum. Inside the endoplasmic reticulum, the protein folding machinery isomerizes VP1 interpentamer disulfide bonds, thereby triggering initial uncoating. Next, the virion uses the endoplasmic reticulum-associated degradation machinery to probably translocate in the cytosol before reaching the nucleus. Nuclear entry of the viral DNA involves the selective exposure and importin recognition of VP2/Vp3 nuclear localization signal. In late phase of infection, neo-synthesized VP1 encapsulates replicated genomic DNA in the nucleus, and participates in rearranging nucleosomes around the viral DNA.</text>
</comment>
<comment type="subunit">
    <text evidence="1">Homomultimer; disulfide-linked. The virus capsid is composed of 72 icosahedral units, each one composed of five disulfide-linked copies of VP1. Interacts with minor capsid proteins VP2 and VP3.</text>
</comment>
<comment type="subcellular location">
    <subcellularLocation>
        <location>Virion</location>
    </subcellularLocation>
    <subcellularLocation>
        <location evidence="1">Host nucleus</location>
    </subcellularLocation>
</comment>
<comment type="alternative products">
    <event type="alternative splicing"/>
    <event type="alternative initiation"/>
    <isoform>
        <id>P24848-1</id>
        <name>VP1</name>
        <sequence type="displayed"/>
    </isoform>
    <isoform>
        <id>P24849-1</id>
        <name>VP2</name>
        <name>Minor capsid protein VP2</name>
        <sequence type="external"/>
    </isoform>
    <isoform>
        <id>P24849-2</id>
        <name>VP3</name>
        <name>Minor capsid protein VP3</name>
        <sequence type="external"/>
    </isoform>
    <isoform>
        <id>P24850-1</id>
        <name>Agno</name>
        <sequence type="external"/>
    </isoform>
</comment>
<comment type="domain">
    <text evidence="1">A DNA-binding domain overlapping a bipartite nuclear localization signal is present in the N-terminal region of the protein and is required for efficient virus formation.</text>
</comment>
<comment type="domain">
    <text evidence="1">The intrinsically disordered C-terminal arm interacts with neighboring pentamers. The unstructured nature of this region allows to make different interactions depending on the structural context: pentamers present at the 12 icosahedral fivefold axes bind five pentamers, whereas pentamers present at the 60 icosahedral six-fold axes interact with six pentamers.</text>
</comment>
<comment type="miscellaneous">
    <molecule>Isoform VP1</molecule>
    <text>Produced by alternative splicing of the late mRNA.</text>
</comment>
<comment type="similarity">
    <text evidence="3">Belongs to the polyomaviruses coat protein VP1 family.</text>
</comment>
<proteinExistence type="inferred from homology"/>
<feature type="chain" id="PRO_0000115019" description="Major capsid protein VP1">
    <location>
        <begin position="1"/>
        <end position="365"/>
    </location>
</feature>
<feature type="region of interest" description="Disordered" evidence="2">
    <location>
        <begin position="1"/>
        <end position="22"/>
    </location>
</feature>
<feature type="region of interest" description="C-terminal arm" evidence="1">
    <location>
        <begin position="307"/>
        <end position="365"/>
    </location>
</feature>
<feature type="short sequence motif" description="Bipartite nuclear localization signal" evidence="1">
    <location>
        <begin position="5"/>
        <end position="16"/>
    </location>
</feature>
<dbReference type="EMBL" id="D13942">
    <property type="protein sequence ID" value="BAA03039.1"/>
    <property type="molecule type" value="Genomic_DNA"/>
</dbReference>
<dbReference type="PIR" id="JU0359">
    <property type="entry name" value="VVVPB1"/>
</dbReference>
<dbReference type="RefSeq" id="NP_040787.1">
    <molecule id="P24848-1"/>
    <property type="nucleotide sequence ID" value="NC_001442.1"/>
</dbReference>
<dbReference type="SMR" id="P24848"/>
<dbReference type="GeneID" id="29031005"/>
<dbReference type="KEGG" id="vg:29031005"/>
<dbReference type="OrthoDB" id="12524at10239"/>
<dbReference type="Proteomes" id="UP000008476">
    <property type="component" value="Genome"/>
</dbReference>
<dbReference type="GO" id="GO:0042025">
    <property type="term" value="C:host cell nucleus"/>
    <property type="evidence" value="ECO:0007669"/>
    <property type="project" value="UniProtKB-SubCell"/>
</dbReference>
<dbReference type="GO" id="GO:0039620">
    <property type="term" value="C:T=7 icosahedral viral capsid"/>
    <property type="evidence" value="ECO:0007669"/>
    <property type="project" value="UniProtKB-KW"/>
</dbReference>
<dbReference type="GO" id="GO:0005198">
    <property type="term" value="F:structural molecule activity"/>
    <property type="evidence" value="ECO:0007669"/>
    <property type="project" value="InterPro"/>
</dbReference>
<dbReference type="GO" id="GO:0075509">
    <property type="term" value="P:endocytosis involved in viral entry into host cell"/>
    <property type="evidence" value="ECO:0007669"/>
    <property type="project" value="UniProtKB-KW"/>
</dbReference>
<dbReference type="GO" id="GO:0019062">
    <property type="term" value="P:virion attachment to host cell"/>
    <property type="evidence" value="ECO:0007669"/>
    <property type="project" value="UniProtKB-KW"/>
</dbReference>
<dbReference type="Gene3D" id="2.60.175.10">
    <property type="entry name" value="Capsid protein VP1,Polyomavirus"/>
    <property type="match status" value="1"/>
</dbReference>
<dbReference type="InterPro" id="IPR000662">
    <property type="entry name" value="Capsid_VP1_Polyomavir"/>
</dbReference>
<dbReference type="InterPro" id="IPR011222">
    <property type="entry name" value="dsDNA_vir_gr_I_capsid"/>
</dbReference>
<dbReference type="InterPro" id="IPR036931">
    <property type="entry name" value="Polyomavir_VP1_sf"/>
</dbReference>
<dbReference type="Pfam" id="PF00718">
    <property type="entry name" value="Polyoma_coat"/>
    <property type="match status" value="1"/>
</dbReference>
<dbReference type="PIRSF" id="PIRSF003376">
    <property type="entry name" value="Capsid_VP1_Polyomavir"/>
    <property type="match status" value="1"/>
</dbReference>
<dbReference type="SUPFAM" id="SSF88648">
    <property type="entry name" value="Group I dsDNA viruses"/>
    <property type="match status" value="1"/>
</dbReference>
<keyword id="KW-0024">Alternative initiation</keyword>
<keyword id="KW-0025">Alternative splicing</keyword>
<keyword id="KW-0167">Capsid protein</keyword>
<keyword id="KW-1015">Disulfide bond</keyword>
<keyword id="KW-1048">Host nucleus</keyword>
<keyword id="KW-0945">Host-virus interaction</keyword>
<keyword id="KW-0426">Late protein</keyword>
<keyword id="KW-1185">Reference proteome</keyword>
<keyword id="KW-1145">T=7 icosahedral capsid protein</keyword>
<keyword id="KW-1161">Viral attachment to host cell</keyword>
<keyword id="KW-1162">Viral penetration into host cytoplasm</keyword>
<keyword id="KW-0946">Virion</keyword>
<keyword id="KW-1164">Virus endocytosis by host</keyword>
<keyword id="KW-1160">Virus entry into host cell</keyword>
<accession>P24848</accession>
<name>VP1_POVBO</name>
<reference key="1">
    <citation type="journal article" date="1990" name="J. Gen. Virol.">
        <title>The complete nucleotide sequence of bovine polyomavirus.</title>
        <authorList>
            <person name="Schuurman R."/>
            <person name="Sol C."/>
            <person name="van der Noordaa J."/>
        </authorList>
    </citation>
    <scope>NUCLEOTIDE SEQUENCE [GENOMIC DNA]</scope>
</reference>
<reference key="2">
    <citation type="journal article" date="2009" name="Virology">
        <title>The Polyomaviridae: Contributions of virus structure to our understanding of virus receptors and infectious entry.</title>
        <authorList>
            <person name="Neu U."/>
            <person name="Stehle T."/>
            <person name="Atwood W.J."/>
        </authorList>
    </citation>
    <scope>REVIEW</scope>
</reference>
<sequence length="365" mass="40514">MSRMRKNMNPPKKGLKGQPSPVPKLIIKGGIEVLGLRTGPDSTTTIELFLNPRMGQSTESEYYGFSDNQRGSTSRTDEDLISAELPRYSLGVVQLPLLNEKLTDDVLLMWEAVSCKTEVVGVNTLTTCHGYKKRYSPSAGQGSAMPIEGINYHFFAVGGEPLEIQFICEDFKAPYHPTETIVPPKDKLSNKSQVLDPTLKGILDKDGVYPVECWCPDPSKNENTRYFGTYTGGVSTPPVLQFTNTVTTILLDENGVGPLCKADKLYITAADICGFLTQPNDQQQFRGLPRYMSVTLRKRLVKNPYPIASILTSLFTNSLPPVTSQEMDKQVEEVRIYQGVEGLPGDPDMVRYINKFGQEETCIPK</sequence>
<evidence type="ECO:0000250" key="1">
    <source>
        <dbReference type="UniProtKB" id="P03087"/>
    </source>
</evidence>
<evidence type="ECO:0000256" key="2">
    <source>
        <dbReference type="SAM" id="MobiDB-lite"/>
    </source>
</evidence>
<evidence type="ECO:0000305" key="3"/>
<evidence type="ECO:0000305" key="4">
    <source>
    </source>
</evidence>
<organism>
    <name type="scientific">Bovine polyomavirus</name>
    <name type="common">BPyV</name>
    <name type="synonym">Bos taurus polyomavirus 1</name>
    <dbReference type="NCBI Taxonomy" id="1891754"/>
    <lineage>
        <taxon>Viruses</taxon>
        <taxon>Monodnaviria</taxon>
        <taxon>Shotokuvirae</taxon>
        <taxon>Cossaviricota</taxon>
        <taxon>Papovaviricetes</taxon>
        <taxon>Sepolyvirales</taxon>
        <taxon>Polyomaviridae</taxon>
        <taxon>Epsilonpolyomavirus</taxon>
    </lineage>
</organism>